<feature type="signal peptide" evidence="2">
    <location>
        <begin position="1"/>
        <end position="55"/>
    </location>
</feature>
<feature type="chain" id="PRO_0000434655" description="Cell surface Cu-only superoxide dismutase ARB_03674" evidence="2">
    <location>
        <begin position="56"/>
        <end position="352"/>
    </location>
</feature>
<feature type="propeptide" id="PRO_0000434656" description="Removed in mature form" evidence="2">
    <location>
        <begin position="353"/>
        <end position="373"/>
    </location>
</feature>
<feature type="region of interest" description="Disordered" evidence="4">
    <location>
        <begin position="329"/>
        <end position="348"/>
    </location>
</feature>
<feature type="compositionally biased region" description="Low complexity" evidence="4">
    <location>
        <begin position="331"/>
        <end position="340"/>
    </location>
</feature>
<feature type="binding site" evidence="1">
    <location>
        <position position="194"/>
    </location>
    <ligand>
        <name>Cu cation</name>
        <dbReference type="ChEBI" id="CHEBI:23378"/>
        <note>catalytic</note>
    </ligand>
</feature>
<feature type="binding site" evidence="1">
    <location>
        <position position="196"/>
    </location>
    <ligand>
        <name>Cu cation</name>
        <dbReference type="ChEBI" id="CHEBI:23378"/>
        <note>catalytic</note>
    </ligand>
</feature>
<feature type="binding site" evidence="1">
    <location>
        <position position="212"/>
    </location>
    <ligand>
        <name>Cu cation</name>
        <dbReference type="ChEBI" id="CHEBI:23378"/>
        <note>catalytic</note>
    </ligand>
</feature>
<feature type="binding site" evidence="1">
    <location>
        <position position="280"/>
    </location>
    <ligand>
        <name>Cu cation</name>
        <dbReference type="ChEBI" id="CHEBI:23378"/>
        <note>catalytic</note>
    </ligand>
</feature>
<feature type="lipid moiety-binding region" description="GPI-anchor amidated glycine" evidence="2">
    <location>
        <position position="352"/>
    </location>
</feature>
<feature type="glycosylation site" description="N-linked (GlcNAc...) asparagine" evidence="3">
    <location>
        <position position="75"/>
    </location>
</feature>
<feature type="glycosylation site" description="N-linked (GlcNAc...) asparagine" evidence="3">
    <location>
        <position position="141"/>
    </location>
</feature>
<feature type="glycosylation site" description="N-linked (GlcNAc...) asparagine" evidence="3">
    <location>
        <position position="254"/>
    </location>
</feature>
<feature type="glycosylation site" description="N-linked (GlcNAc...) asparagine" evidence="3">
    <location>
        <position position="274"/>
    </location>
</feature>
<feature type="glycosylation site" description="N-linked (GlcNAc...) asparagine" evidence="3">
    <location>
        <position position="283"/>
    </location>
</feature>
<feature type="glycosylation site" description="N-linked (GlcNAc...) asparagine" evidence="3">
    <location>
        <position position="291"/>
    </location>
</feature>
<feature type="disulfide bond" evidence="1">
    <location>
        <begin position="206"/>
        <end position="289"/>
    </location>
</feature>
<accession>D4B5D4</accession>
<dbReference type="EC" id="1.15.1.1" evidence="1"/>
<dbReference type="EMBL" id="ABSU01000039">
    <property type="protein sequence ID" value="EFE29467.1"/>
    <property type="molecule type" value="Genomic_DNA"/>
</dbReference>
<dbReference type="RefSeq" id="XP_003010107.1">
    <property type="nucleotide sequence ID" value="XM_003010061.1"/>
</dbReference>
<dbReference type="SMR" id="D4B5D4"/>
<dbReference type="STRING" id="663331.D4B5D4"/>
<dbReference type="GeneID" id="9525375"/>
<dbReference type="KEGG" id="abe:ARB_03674"/>
<dbReference type="eggNOG" id="ENOG502S5NX">
    <property type="taxonomic scope" value="Eukaryota"/>
</dbReference>
<dbReference type="HOGENOM" id="CLU_063073_0_0_1"/>
<dbReference type="OMA" id="TRITCAD"/>
<dbReference type="Proteomes" id="UP000008866">
    <property type="component" value="Unassembled WGS sequence"/>
</dbReference>
<dbReference type="GO" id="GO:0005576">
    <property type="term" value="C:extracellular region"/>
    <property type="evidence" value="ECO:0007669"/>
    <property type="project" value="UniProtKB-SubCell"/>
</dbReference>
<dbReference type="GO" id="GO:0005886">
    <property type="term" value="C:plasma membrane"/>
    <property type="evidence" value="ECO:0007669"/>
    <property type="project" value="UniProtKB-SubCell"/>
</dbReference>
<dbReference type="GO" id="GO:0098552">
    <property type="term" value="C:side of membrane"/>
    <property type="evidence" value="ECO:0007669"/>
    <property type="project" value="UniProtKB-KW"/>
</dbReference>
<dbReference type="GO" id="GO:0046872">
    <property type="term" value="F:metal ion binding"/>
    <property type="evidence" value="ECO:0007669"/>
    <property type="project" value="UniProtKB-KW"/>
</dbReference>
<dbReference type="GO" id="GO:0004784">
    <property type="term" value="F:superoxide dismutase activity"/>
    <property type="evidence" value="ECO:0007669"/>
    <property type="project" value="UniProtKB-EC"/>
</dbReference>
<dbReference type="Gene3D" id="2.60.40.200">
    <property type="entry name" value="Superoxide dismutase, copper/zinc binding domain"/>
    <property type="match status" value="1"/>
</dbReference>
<dbReference type="InterPro" id="IPR053257">
    <property type="entry name" value="Cu-only_SOD"/>
</dbReference>
<dbReference type="InterPro" id="IPR036423">
    <property type="entry name" value="SOD-like_Cu/Zn_dom_sf"/>
</dbReference>
<dbReference type="PANTHER" id="PTHR20910">
    <property type="entry name" value="AGAP001623-PA"/>
    <property type="match status" value="1"/>
</dbReference>
<dbReference type="PANTHER" id="PTHR20910:SF1">
    <property type="entry name" value="SUPEROXIDE DISMUTASE COPPER_ZINC BINDING DOMAIN-CONTAINING PROTEIN"/>
    <property type="match status" value="1"/>
</dbReference>
<dbReference type="SUPFAM" id="SSF49329">
    <property type="entry name" value="Cu,Zn superoxide dismutase-like"/>
    <property type="match status" value="1"/>
</dbReference>
<name>SOD5_ARTBC</name>
<evidence type="ECO:0000250" key="1">
    <source>
        <dbReference type="UniProtKB" id="Q5AD07"/>
    </source>
</evidence>
<evidence type="ECO:0000255" key="2"/>
<evidence type="ECO:0000255" key="3">
    <source>
        <dbReference type="PROSITE-ProRule" id="PRU00498"/>
    </source>
</evidence>
<evidence type="ECO:0000256" key="4">
    <source>
        <dbReference type="SAM" id="MobiDB-lite"/>
    </source>
</evidence>
<evidence type="ECO:0000269" key="5">
    <source>
    </source>
</evidence>
<evidence type="ECO:0000269" key="6">
    <source>
    </source>
</evidence>
<evidence type="ECO:0000305" key="7"/>
<reference key="1">
    <citation type="journal article" date="2011" name="Genome Biol.">
        <title>Comparative and functional genomics provide insights into the pathogenicity of dermatophytic fungi.</title>
        <authorList>
            <person name="Burmester A."/>
            <person name="Shelest E."/>
            <person name="Gloeckner G."/>
            <person name="Heddergott C."/>
            <person name="Schindler S."/>
            <person name="Staib P."/>
            <person name="Heidel A."/>
            <person name="Felder M."/>
            <person name="Petzold A."/>
            <person name="Szafranski K."/>
            <person name="Feuermann M."/>
            <person name="Pedruzzi I."/>
            <person name="Priebe S."/>
            <person name="Groth M."/>
            <person name="Winkler R."/>
            <person name="Li W."/>
            <person name="Kniemeyer O."/>
            <person name="Schroeckh V."/>
            <person name="Hertweck C."/>
            <person name="Hube B."/>
            <person name="White T.C."/>
            <person name="Platzer M."/>
            <person name="Guthke R."/>
            <person name="Heitman J."/>
            <person name="Woestemeyer J."/>
            <person name="Zipfel P.F."/>
            <person name="Monod M."/>
            <person name="Brakhage A.A."/>
        </authorList>
    </citation>
    <scope>NUCLEOTIDE SEQUENCE [LARGE SCALE GENOMIC DNA]</scope>
    <scope>INDUCTION</scope>
    <source>
        <strain>ATCC MYA-4681 / CBS 112371</strain>
    </source>
</reference>
<reference key="2">
    <citation type="journal article" date="2011" name="Proteomics">
        <title>Identification of novel secreted proteases during extracellular proteolysis by dermatophytes at acidic pH.</title>
        <authorList>
            <person name="Sriranganadane D."/>
            <person name="Waridel P."/>
            <person name="Salamin K."/>
            <person name="Feuermann M."/>
            <person name="Mignon B."/>
            <person name="Staib P."/>
            <person name="Neuhaus J.M."/>
            <person name="Quadroni M."/>
            <person name="Monod M."/>
        </authorList>
    </citation>
    <scope>IDENTIFICATION BY MASS SPECTROMETRY</scope>
    <scope>SUBCELLULAR LOCATION</scope>
</reference>
<protein>
    <recommendedName>
        <fullName evidence="7">Cell surface Cu-only superoxide dismutase ARB_03674</fullName>
        <ecNumber evidence="1">1.15.1.1</ecNumber>
    </recommendedName>
</protein>
<proteinExistence type="evidence at protein level"/>
<comment type="function">
    <text evidence="1">Superoxide dismutases serve to convert damaging superoxide radicals, a key form of ROS, to less damaging hydrogen peroxide that can be converted into water by catalase action (By similarity). Degrades host-derived reactive oxygen species to escape innate immune surveillance (By similarity). Involved in the occurrence of miconazole-tolerant persisters in biofilms (By similarity). Persisters are cells that survive high doses of an antimicrobial agent. The unusual attributes of SOD5-like fungal proteins, including the absence of zinc and an open active site that readily captures extracellular copper, make these SODs well suited to meet challenges in zinc and copper availability at the host-pathogen interface (By similarity).</text>
</comment>
<comment type="catalytic activity">
    <reaction evidence="1">
        <text>2 superoxide + 2 H(+) = H2O2 + O2</text>
        <dbReference type="Rhea" id="RHEA:20696"/>
        <dbReference type="ChEBI" id="CHEBI:15378"/>
        <dbReference type="ChEBI" id="CHEBI:15379"/>
        <dbReference type="ChEBI" id="CHEBI:16240"/>
        <dbReference type="ChEBI" id="CHEBI:18421"/>
        <dbReference type="EC" id="1.15.1.1"/>
    </reaction>
</comment>
<comment type="cofactor">
    <cofactor evidence="1">
        <name>Cu cation</name>
        <dbReference type="ChEBI" id="CHEBI:23378"/>
    </cofactor>
    <text evidence="1">Binds 1 copper ion per subunit.</text>
</comment>
<comment type="subunit">
    <text evidence="1">Monomer.</text>
</comment>
<comment type="subcellular location">
    <subcellularLocation>
        <location evidence="1">Secreted</location>
        <location evidence="1">Cell wall</location>
    </subcellularLocation>
    <subcellularLocation>
        <location evidence="6">Secreted</location>
    </subcellularLocation>
    <subcellularLocation>
        <location evidence="2">Cell membrane</location>
        <topology evidence="2">Lipid-anchor</topology>
        <topology evidence="2">GPI-anchor</topology>
    </subcellularLocation>
    <text evidence="1">Covalently-linked GPI-modified cell wall protein (GPI-CWP).</text>
</comment>
<comment type="induction">
    <text evidence="5">Expression is down-regulated in presence of human keratinocytes.</text>
</comment>
<comment type="PTM">
    <text evidence="7">The GPI-anchor is attached to the protein in the endoplasmic reticulum and serves to target the protein to the cell surface. There, the glucosamine-inositol phospholipid moiety is cleaved off and the GPI-modified mannoprotein is covalently attached via its lipidless GPI glycan remnant to the 1,6-beta-glucan of the outer cell wall layer.</text>
</comment>
<comment type="similarity">
    <text evidence="7">Belongs to the Cu-Zn superoxide dismutase family.</text>
</comment>
<comment type="caution">
    <text evidence="1">Although the beta-barrel of Cu/Zn SODs is largely preserved, SOD5 is a monomeric copper protein that lacks a zinc-binding site and is missing the electrostatic loop element proposed to promote catalysis through superoxide guidance. Without an electrostatic loop, the copper site of SOD5 is not recessed and is readily accessible to bulk solvent.</text>
</comment>
<keyword id="KW-0049">Antioxidant</keyword>
<keyword id="KW-1003">Cell membrane</keyword>
<keyword id="KW-0134">Cell wall</keyword>
<keyword id="KW-0186">Copper</keyword>
<keyword id="KW-1015">Disulfide bond</keyword>
<keyword id="KW-0325">Glycoprotein</keyword>
<keyword id="KW-0336">GPI-anchor</keyword>
<keyword id="KW-0449">Lipoprotein</keyword>
<keyword id="KW-0472">Membrane</keyword>
<keyword id="KW-0479">Metal-binding</keyword>
<keyword id="KW-0560">Oxidoreductase</keyword>
<keyword id="KW-1185">Reference proteome</keyword>
<keyword id="KW-0964">Secreted</keyword>
<keyword id="KW-0732">Signal</keyword>
<keyword id="KW-0843">Virulence</keyword>
<sequence>MIWKQPPRRMGEMGGSLSRRFGNAAASWAVWRVSRSCFSLLFFFYFFLFFSSSSLLPTTNNYQHLQLHSLIPTLNTTAHLPHQQASSASMKASLFLACSALGLALATPTQDAPETVNNPLGIVYQAKLPETSRTGIRGTINATAHSSGRGVVFNLDLWGFDNTEGPFRKLHTCFDQTNKQTNKIVKLTTTTAYHIHVDPVPTDGSCGPTKDHLDPFGRGQTPPCDDSLPQTCEPGDLSGKFGRLTTSSMEEHFNQTFHDLYTSTRPGLGTFFGNRSIVIHHRNSTRLTCANFTLVEQPGTSTTYVPRPTGTGIISSIFPTGTGAISTSGHAPTISATYTPTPTPSPPAQNNGAGRLVGFSLGAIMAALVPLAL</sequence>
<organism>
    <name type="scientific">Arthroderma benhamiae (strain ATCC MYA-4681 / CBS 112371)</name>
    <name type="common">Trichophyton mentagrophytes</name>
    <dbReference type="NCBI Taxonomy" id="663331"/>
    <lineage>
        <taxon>Eukaryota</taxon>
        <taxon>Fungi</taxon>
        <taxon>Dikarya</taxon>
        <taxon>Ascomycota</taxon>
        <taxon>Pezizomycotina</taxon>
        <taxon>Eurotiomycetes</taxon>
        <taxon>Eurotiomycetidae</taxon>
        <taxon>Onygenales</taxon>
        <taxon>Arthrodermataceae</taxon>
        <taxon>Trichophyton</taxon>
    </lineage>
</organism>
<gene>
    <name type="ORF">ARB_03674</name>
</gene>